<evidence type="ECO:0000255" key="1">
    <source>
        <dbReference type="HAMAP-Rule" id="MF_01336"/>
    </source>
</evidence>
<evidence type="ECO:0000305" key="2"/>
<protein>
    <recommendedName>
        <fullName evidence="1">Large ribosomal subunit protein bL25</fullName>
    </recommendedName>
    <alternativeName>
        <fullName evidence="2">50S ribosomal protein L25</fullName>
    </alternativeName>
</protein>
<dbReference type="EMBL" id="AJ749949">
    <property type="protein sequence ID" value="CAG45308.1"/>
    <property type="molecule type" value="Genomic_DNA"/>
</dbReference>
<dbReference type="RefSeq" id="WP_003018840.1">
    <property type="nucleotide sequence ID" value="NZ_CP010290.1"/>
</dbReference>
<dbReference type="RefSeq" id="YP_169691.1">
    <property type="nucleotide sequence ID" value="NC_006570.2"/>
</dbReference>
<dbReference type="SMR" id="Q5NH01"/>
<dbReference type="STRING" id="177416.FTT_0675"/>
<dbReference type="DNASU" id="3191997"/>
<dbReference type="EnsemblBacteria" id="CAG45308">
    <property type="protein sequence ID" value="CAG45308"/>
    <property type="gene ID" value="FTT_0675"/>
</dbReference>
<dbReference type="GeneID" id="75265258"/>
<dbReference type="KEGG" id="ftu:FTT_0675"/>
<dbReference type="eggNOG" id="COG1825">
    <property type="taxonomic scope" value="Bacteria"/>
</dbReference>
<dbReference type="OrthoDB" id="9806411at2"/>
<dbReference type="Proteomes" id="UP000001174">
    <property type="component" value="Chromosome"/>
</dbReference>
<dbReference type="GO" id="GO:0022625">
    <property type="term" value="C:cytosolic large ribosomal subunit"/>
    <property type="evidence" value="ECO:0007669"/>
    <property type="project" value="TreeGrafter"/>
</dbReference>
<dbReference type="GO" id="GO:0008097">
    <property type="term" value="F:5S rRNA binding"/>
    <property type="evidence" value="ECO:0007669"/>
    <property type="project" value="InterPro"/>
</dbReference>
<dbReference type="GO" id="GO:0003735">
    <property type="term" value="F:structural constituent of ribosome"/>
    <property type="evidence" value="ECO:0007669"/>
    <property type="project" value="InterPro"/>
</dbReference>
<dbReference type="GO" id="GO:0006412">
    <property type="term" value="P:translation"/>
    <property type="evidence" value="ECO:0007669"/>
    <property type="project" value="UniProtKB-UniRule"/>
</dbReference>
<dbReference type="CDD" id="cd00495">
    <property type="entry name" value="Ribosomal_L25_TL5_CTC"/>
    <property type="match status" value="1"/>
</dbReference>
<dbReference type="FunFam" id="2.40.240.10:FF:000002">
    <property type="entry name" value="50S ribosomal protein L25"/>
    <property type="match status" value="1"/>
</dbReference>
<dbReference type="Gene3D" id="2.40.240.10">
    <property type="entry name" value="Ribosomal Protein L25, Chain P"/>
    <property type="match status" value="1"/>
</dbReference>
<dbReference type="HAMAP" id="MF_01336">
    <property type="entry name" value="Ribosomal_bL25"/>
    <property type="match status" value="1"/>
</dbReference>
<dbReference type="InterPro" id="IPR020056">
    <property type="entry name" value="Rbsml_bL25/Gln-tRNA_synth_N"/>
</dbReference>
<dbReference type="InterPro" id="IPR011035">
    <property type="entry name" value="Ribosomal_bL25/Gln-tRNA_synth"/>
</dbReference>
<dbReference type="InterPro" id="IPR001021">
    <property type="entry name" value="Ribosomal_bL25_long"/>
</dbReference>
<dbReference type="InterPro" id="IPR020055">
    <property type="entry name" value="Ribosomal_bL25_short"/>
</dbReference>
<dbReference type="InterPro" id="IPR029751">
    <property type="entry name" value="Ribosomal_L25_dom"/>
</dbReference>
<dbReference type="InterPro" id="IPR020930">
    <property type="entry name" value="Ribosomal_uL5_bac-type"/>
</dbReference>
<dbReference type="NCBIfam" id="TIGR00731">
    <property type="entry name" value="bL25_bact_ctc"/>
    <property type="match status" value="1"/>
</dbReference>
<dbReference type="NCBIfam" id="NF004612">
    <property type="entry name" value="PRK05943.1"/>
    <property type="match status" value="1"/>
</dbReference>
<dbReference type="PANTHER" id="PTHR33284">
    <property type="entry name" value="RIBOSOMAL PROTEIN L25/GLN-TRNA SYNTHETASE, ANTI-CODON-BINDING DOMAIN-CONTAINING PROTEIN"/>
    <property type="match status" value="1"/>
</dbReference>
<dbReference type="PANTHER" id="PTHR33284:SF1">
    <property type="entry name" value="RIBOSOMAL PROTEIN L25_GLN-TRNA SYNTHETASE, ANTI-CODON-BINDING DOMAIN-CONTAINING PROTEIN"/>
    <property type="match status" value="1"/>
</dbReference>
<dbReference type="Pfam" id="PF01386">
    <property type="entry name" value="Ribosomal_L25p"/>
    <property type="match status" value="1"/>
</dbReference>
<dbReference type="SUPFAM" id="SSF50715">
    <property type="entry name" value="Ribosomal protein L25-like"/>
    <property type="match status" value="1"/>
</dbReference>
<comment type="function">
    <text evidence="1">This is one of the proteins that binds to the 5S RNA in the ribosome where it forms part of the central protuberance.</text>
</comment>
<comment type="subunit">
    <text evidence="1">Part of the 50S ribosomal subunit; part of the 5S rRNA/L5/L18/L25 subcomplex. Contacts the 5S rRNA. Binds to the 5S rRNA independently of L5 and L18.</text>
</comment>
<comment type="similarity">
    <text evidence="1">Belongs to the bacterial ribosomal protein bL25 family.</text>
</comment>
<accession>Q5NH01</accession>
<feature type="chain" id="PRO_0000181482" description="Large ribosomal subunit protein bL25">
    <location>
        <begin position="1"/>
        <end position="96"/>
    </location>
</feature>
<sequence length="96" mass="10846">MANFVLKAEKREDLGTGASRRLRRAGKIPAVIYGGEKEAVSVLLDHDKVLHSTEDKAFFSSEITLDIDGKQEKVIIKALQRHPYKVKLIHADFMRV</sequence>
<organism>
    <name type="scientific">Francisella tularensis subsp. tularensis (strain SCHU S4 / Schu 4)</name>
    <dbReference type="NCBI Taxonomy" id="177416"/>
    <lineage>
        <taxon>Bacteria</taxon>
        <taxon>Pseudomonadati</taxon>
        <taxon>Pseudomonadota</taxon>
        <taxon>Gammaproteobacteria</taxon>
        <taxon>Thiotrichales</taxon>
        <taxon>Francisellaceae</taxon>
        <taxon>Francisella</taxon>
    </lineage>
</organism>
<proteinExistence type="inferred from homology"/>
<reference key="1">
    <citation type="journal article" date="2005" name="Nat. Genet.">
        <title>The complete genome sequence of Francisella tularensis, the causative agent of tularemia.</title>
        <authorList>
            <person name="Larsson P."/>
            <person name="Oyston P.C.F."/>
            <person name="Chain P."/>
            <person name="Chu M.C."/>
            <person name="Duffield M."/>
            <person name="Fuxelius H.-H."/>
            <person name="Garcia E."/>
            <person name="Haelltorp G."/>
            <person name="Johansson D."/>
            <person name="Isherwood K.E."/>
            <person name="Karp P.D."/>
            <person name="Larsson E."/>
            <person name="Liu Y."/>
            <person name="Michell S."/>
            <person name="Prior J."/>
            <person name="Prior R."/>
            <person name="Malfatti S."/>
            <person name="Sjoestedt A."/>
            <person name="Svensson K."/>
            <person name="Thompson N."/>
            <person name="Vergez L."/>
            <person name="Wagg J.K."/>
            <person name="Wren B.W."/>
            <person name="Lindler L.E."/>
            <person name="Andersson S.G.E."/>
            <person name="Forsman M."/>
            <person name="Titball R.W."/>
        </authorList>
    </citation>
    <scope>NUCLEOTIDE SEQUENCE [LARGE SCALE GENOMIC DNA]</scope>
    <source>
        <strain>SCHU S4 / Schu 4</strain>
    </source>
</reference>
<keyword id="KW-1185">Reference proteome</keyword>
<keyword id="KW-0687">Ribonucleoprotein</keyword>
<keyword id="KW-0689">Ribosomal protein</keyword>
<keyword id="KW-0694">RNA-binding</keyword>
<keyword id="KW-0699">rRNA-binding</keyword>
<gene>
    <name evidence="1" type="primary">rplY</name>
    <name type="ordered locus">FTT_0675</name>
</gene>
<name>RL25_FRATT</name>